<evidence type="ECO:0000255" key="1">
    <source>
        <dbReference type="HAMAP-Rule" id="MF_01622"/>
    </source>
</evidence>
<reference key="1">
    <citation type="journal article" date="2008" name="J. Bacteriol.">
        <title>Insights into the environmental resistance gene pool from the genome sequence of the multidrug-resistant environmental isolate Escherichia coli SMS-3-5.</title>
        <authorList>
            <person name="Fricke W.F."/>
            <person name="Wright M.S."/>
            <person name="Lindell A.H."/>
            <person name="Harkins D.M."/>
            <person name="Baker-Austin C."/>
            <person name="Ravel J."/>
            <person name="Stepanauskas R."/>
        </authorList>
    </citation>
    <scope>NUCLEOTIDE SEQUENCE [LARGE SCALE GENOMIC DNA]</scope>
    <source>
        <strain>SMS-3-5 / SECEC</strain>
    </source>
</reference>
<keyword id="KW-0711">Selenium</keyword>
<keyword id="KW-0808">Transferase</keyword>
<sequence>MQERHTEQDYRALLIADTPIIDVRAPIEFEQGAMPAAINLPLMNNDERAAVGTCYKQQGSDAALALGHKLVAGEIRQQRMDAWRAACLQNPQGILCCARGGQRSHIVQSWLHAAGIDYPLVEGGYKALRQTAIQATIELAQKPIVLIGGCTGSGKTLLVQQQPNGVDLEGLARHRGSAFGRTLQPQLSQASFENLLAAEMLKTDARQNLRLWVLEDESRMIGSNHLPECLRERMTQAAIAVVEDPFEIRLERLNEEYFLRMHHDFTHAYGDEQGWQEYCEYLHHGLSAIKRRLGLQRYNELAARLDAALTTQLTTGSTDGHLAWLVPLLEEYYDPMYRYQLEKKAEKVVFRGEWAEVAEWVKSR</sequence>
<feature type="chain" id="PRO_1000186074" description="tRNA 2-selenouridine synthase">
    <location>
        <begin position="1"/>
        <end position="364"/>
    </location>
</feature>
<feature type="domain" description="Rhodanese" evidence="1">
    <location>
        <begin position="14"/>
        <end position="137"/>
    </location>
</feature>
<feature type="active site" description="S-selanylcysteine intermediate" evidence="1">
    <location>
        <position position="97"/>
    </location>
</feature>
<dbReference type="EC" id="2.9.1.3" evidence="1"/>
<dbReference type="EMBL" id="CP000970">
    <property type="protein sequence ID" value="ACB18921.1"/>
    <property type="molecule type" value="Genomic_DNA"/>
</dbReference>
<dbReference type="SMR" id="B1LKC2"/>
<dbReference type="KEGG" id="ecm:EcSMS35_0546"/>
<dbReference type="HOGENOM" id="CLU_043456_1_0_6"/>
<dbReference type="Proteomes" id="UP000007011">
    <property type="component" value="Chromosome"/>
</dbReference>
<dbReference type="GO" id="GO:0016765">
    <property type="term" value="F:transferase activity, transferring alkyl or aryl (other than methyl) groups"/>
    <property type="evidence" value="ECO:0007669"/>
    <property type="project" value="UniProtKB-UniRule"/>
</dbReference>
<dbReference type="GO" id="GO:0043828">
    <property type="term" value="F:tRNA 2-selenouridine synthase activity"/>
    <property type="evidence" value="ECO:0007669"/>
    <property type="project" value="UniProtKB-EC"/>
</dbReference>
<dbReference type="GO" id="GO:0002098">
    <property type="term" value="P:tRNA wobble uridine modification"/>
    <property type="evidence" value="ECO:0007669"/>
    <property type="project" value="UniProtKB-UniRule"/>
</dbReference>
<dbReference type="CDD" id="cd01520">
    <property type="entry name" value="RHOD_YbbB"/>
    <property type="match status" value="1"/>
</dbReference>
<dbReference type="FunFam" id="3.40.250.10:FF:000009">
    <property type="entry name" value="tRNA 2-selenouridine/geranyl-2-thiouridine synthase"/>
    <property type="match status" value="1"/>
</dbReference>
<dbReference type="Gene3D" id="3.40.250.10">
    <property type="entry name" value="Rhodanese-like domain"/>
    <property type="match status" value="1"/>
</dbReference>
<dbReference type="HAMAP" id="MF_01622">
    <property type="entry name" value="tRNA_sel_U_synth"/>
    <property type="match status" value="1"/>
</dbReference>
<dbReference type="InterPro" id="IPR001763">
    <property type="entry name" value="Rhodanese-like_dom"/>
</dbReference>
<dbReference type="InterPro" id="IPR036873">
    <property type="entry name" value="Rhodanese-like_dom_sf"/>
</dbReference>
<dbReference type="InterPro" id="IPR017582">
    <property type="entry name" value="SelU"/>
</dbReference>
<dbReference type="NCBIfam" id="NF008749">
    <property type="entry name" value="PRK11784.1-1"/>
    <property type="match status" value="1"/>
</dbReference>
<dbReference type="NCBIfam" id="NF008751">
    <property type="entry name" value="PRK11784.1-3"/>
    <property type="match status" value="1"/>
</dbReference>
<dbReference type="NCBIfam" id="TIGR03167">
    <property type="entry name" value="tRNA_sel_U_synt"/>
    <property type="match status" value="1"/>
</dbReference>
<dbReference type="PANTHER" id="PTHR30401">
    <property type="entry name" value="TRNA 2-SELENOURIDINE SYNTHASE"/>
    <property type="match status" value="1"/>
</dbReference>
<dbReference type="PANTHER" id="PTHR30401:SF0">
    <property type="entry name" value="TRNA 2-SELENOURIDINE SYNTHASE"/>
    <property type="match status" value="1"/>
</dbReference>
<dbReference type="Pfam" id="PF00581">
    <property type="entry name" value="Rhodanese"/>
    <property type="match status" value="1"/>
</dbReference>
<dbReference type="SMART" id="SM00450">
    <property type="entry name" value="RHOD"/>
    <property type="match status" value="1"/>
</dbReference>
<dbReference type="SUPFAM" id="SSF52821">
    <property type="entry name" value="Rhodanese/Cell cycle control phosphatase"/>
    <property type="match status" value="1"/>
</dbReference>
<dbReference type="PROSITE" id="PS50206">
    <property type="entry name" value="RHODANESE_3"/>
    <property type="match status" value="1"/>
</dbReference>
<gene>
    <name evidence="1" type="primary">selU</name>
    <name type="ordered locus">EcSMS35_0546</name>
</gene>
<protein>
    <recommendedName>
        <fullName evidence="1">tRNA 2-selenouridine synthase</fullName>
        <ecNumber evidence="1">2.9.1.3</ecNumber>
    </recommendedName>
</protein>
<proteinExistence type="inferred from homology"/>
<organism>
    <name type="scientific">Escherichia coli (strain SMS-3-5 / SECEC)</name>
    <dbReference type="NCBI Taxonomy" id="439855"/>
    <lineage>
        <taxon>Bacteria</taxon>
        <taxon>Pseudomonadati</taxon>
        <taxon>Pseudomonadota</taxon>
        <taxon>Gammaproteobacteria</taxon>
        <taxon>Enterobacterales</taxon>
        <taxon>Enterobacteriaceae</taxon>
        <taxon>Escherichia</taxon>
    </lineage>
</organism>
<comment type="function">
    <text evidence="1">Involved in the post-transcriptional modification of the uridine at the wobble position (U34) of tRNA(Lys), tRNA(Glu) and tRNA(Gln). Catalyzes the conversion of 2-thiouridine (S2U-RNA) to 2-selenouridine (Se2U-RNA). Acts in a two-step process involving geranylation of 2-thiouridine (S2U) to S-geranyl-2-thiouridine (geS2U) and subsequent selenation of the latter derivative to 2-selenouridine (Se2U) in the tRNA chain.</text>
</comment>
<comment type="catalytic activity">
    <reaction evidence="1">
        <text>5-methylaminomethyl-2-thiouridine(34) in tRNA + selenophosphate + (2E)-geranyl diphosphate + H2O + H(+) = 5-methylaminomethyl-2-selenouridine(34) in tRNA + (2E)-thiogeraniol + phosphate + diphosphate</text>
        <dbReference type="Rhea" id="RHEA:42716"/>
        <dbReference type="Rhea" id="RHEA-COMP:10195"/>
        <dbReference type="Rhea" id="RHEA-COMP:10196"/>
        <dbReference type="ChEBI" id="CHEBI:15377"/>
        <dbReference type="ChEBI" id="CHEBI:15378"/>
        <dbReference type="ChEBI" id="CHEBI:16144"/>
        <dbReference type="ChEBI" id="CHEBI:33019"/>
        <dbReference type="ChEBI" id="CHEBI:43474"/>
        <dbReference type="ChEBI" id="CHEBI:58057"/>
        <dbReference type="ChEBI" id="CHEBI:74455"/>
        <dbReference type="ChEBI" id="CHEBI:82743"/>
        <dbReference type="ChEBI" id="CHEBI:143703"/>
        <dbReference type="EC" id="2.9.1.3"/>
    </reaction>
    <physiologicalReaction direction="left-to-right" evidence="1">
        <dbReference type="Rhea" id="RHEA:42717"/>
    </physiologicalReaction>
</comment>
<comment type="catalytic activity">
    <reaction evidence="1">
        <text>5-methylaminomethyl-2-thiouridine(34) in tRNA + (2E)-geranyl diphosphate = 5-methylaminomethyl-S-(2E)-geranyl-thiouridine(34) in tRNA + diphosphate</text>
        <dbReference type="Rhea" id="RHEA:14085"/>
        <dbReference type="Rhea" id="RHEA-COMP:10195"/>
        <dbReference type="Rhea" id="RHEA-COMP:14654"/>
        <dbReference type="ChEBI" id="CHEBI:33019"/>
        <dbReference type="ChEBI" id="CHEBI:58057"/>
        <dbReference type="ChEBI" id="CHEBI:74455"/>
        <dbReference type="ChEBI" id="CHEBI:140632"/>
    </reaction>
    <physiologicalReaction direction="left-to-right" evidence="1">
        <dbReference type="Rhea" id="RHEA:14086"/>
    </physiologicalReaction>
</comment>
<comment type="catalytic activity">
    <reaction evidence="1">
        <text>5-methylaminomethyl-S-(2E)-geranyl-thiouridine(34) in tRNA + selenophosphate + H(+) = 5-methylaminomethyl-2-(Se-phospho)selenouridine(34) in tRNA + (2E)-thiogeraniol</text>
        <dbReference type="Rhea" id="RHEA:60172"/>
        <dbReference type="Rhea" id="RHEA-COMP:14654"/>
        <dbReference type="Rhea" id="RHEA-COMP:15523"/>
        <dbReference type="ChEBI" id="CHEBI:15378"/>
        <dbReference type="ChEBI" id="CHEBI:16144"/>
        <dbReference type="ChEBI" id="CHEBI:140632"/>
        <dbReference type="ChEBI" id="CHEBI:143702"/>
        <dbReference type="ChEBI" id="CHEBI:143703"/>
    </reaction>
    <physiologicalReaction direction="left-to-right" evidence="1">
        <dbReference type="Rhea" id="RHEA:60173"/>
    </physiologicalReaction>
</comment>
<comment type="catalytic activity">
    <reaction evidence="1">
        <text>5-methylaminomethyl-2-(Se-phospho)selenouridine(34) in tRNA + H2O = 5-methylaminomethyl-2-selenouridine(34) in tRNA + phosphate</text>
        <dbReference type="Rhea" id="RHEA:60176"/>
        <dbReference type="Rhea" id="RHEA-COMP:10196"/>
        <dbReference type="Rhea" id="RHEA-COMP:15523"/>
        <dbReference type="ChEBI" id="CHEBI:15377"/>
        <dbReference type="ChEBI" id="CHEBI:43474"/>
        <dbReference type="ChEBI" id="CHEBI:82743"/>
        <dbReference type="ChEBI" id="CHEBI:143702"/>
    </reaction>
    <physiologicalReaction direction="left-to-right" evidence="1">
        <dbReference type="Rhea" id="RHEA:60177"/>
    </physiologicalReaction>
</comment>
<comment type="subunit">
    <text evidence="1">Monomer.</text>
</comment>
<comment type="similarity">
    <text evidence="1">Belongs to the SelU family.</text>
</comment>
<name>SELU_ECOSM</name>
<accession>B1LKC2</accession>